<protein>
    <recommendedName>
        <fullName evidence="1">Glucose-1-phosphate adenylyltransferase</fullName>
        <ecNumber evidence="1">2.7.7.27</ecNumber>
    </recommendedName>
    <alternativeName>
        <fullName evidence="1">ADP-glucose pyrophosphorylase</fullName>
        <shortName evidence="1">ADPGlc PPase</shortName>
    </alternativeName>
    <alternativeName>
        <fullName evidence="1">ADP-glucose synthase</fullName>
    </alternativeName>
</protein>
<organism>
    <name type="scientific">Rhodopirellula baltica (strain DSM 10527 / NCIMB 13988 / SH1)</name>
    <dbReference type="NCBI Taxonomy" id="243090"/>
    <lineage>
        <taxon>Bacteria</taxon>
        <taxon>Pseudomonadati</taxon>
        <taxon>Planctomycetota</taxon>
        <taxon>Planctomycetia</taxon>
        <taxon>Pirellulales</taxon>
        <taxon>Pirellulaceae</taxon>
        <taxon>Rhodopirellula</taxon>
    </lineage>
</organism>
<accession>Q7UXF5</accession>
<keyword id="KW-0067">ATP-binding</keyword>
<keyword id="KW-0119">Carbohydrate metabolism</keyword>
<keyword id="KW-0320">Glycogen biosynthesis</keyword>
<keyword id="KW-0321">Glycogen metabolism</keyword>
<keyword id="KW-0547">Nucleotide-binding</keyword>
<keyword id="KW-0548">Nucleotidyltransferase</keyword>
<keyword id="KW-1185">Reference proteome</keyword>
<keyword id="KW-0808">Transferase</keyword>
<feature type="chain" id="PRO_0000195320" description="Glucose-1-phosphate adenylyltransferase">
    <location>
        <begin position="1"/>
        <end position="446"/>
    </location>
</feature>
<feature type="binding site" evidence="1">
    <location>
        <position position="119"/>
    </location>
    <ligand>
        <name>alpha-D-glucose 1-phosphate</name>
        <dbReference type="ChEBI" id="CHEBI:58601"/>
    </ligand>
</feature>
<feature type="binding site" evidence="1">
    <location>
        <position position="184"/>
    </location>
    <ligand>
        <name>alpha-D-glucose 1-phosphate</name>
        <dbReference type="ChEBI" id="CHEBI:58601"/>
    </ligand>
</feature>
<feature type="binding site" evidence="1">
    <location>
        <begin position="199"/>
        <end position="200"/>
    </location>
    <ligand>
        <name>alpha-D-glucose 1-phosphate</name>
        <dbReference type="ChEBI" id="CHEBI:58601"/>
    </ligand>
</feature>
<feature type="binding site" evidence="1">
    <location>
        <position position="217"/>
    </location>
    <ligand>
        <name>alpha-D-glucose 1-phosphate</name>
        <dbReference type="ChEBI" id="CHEBI:58601"/>
    </ligand>
</feature>
<sequence>MQPEHVAGANMPNAVGNHDPMMRQTVTVILAGGRGSRLEPLTRDRAKPAVPIGGAYRIIDFVLSNCLNSDMRRLLLLTQYKAQSLDRHINVAWRNYFCRELGEFIDVVPPQQRIDDNWYQGTADAVYQNIYAIEREAPEYVVILAGDHLYKMNYESMVNFHHRKGADVTVGALRVSREEARQFGVMQVDTDNRLVEFQEKPENPRPTLDDPDVCLASMGIYVFNTRFLFERLCDDATQPDSDHDFGKNIIPGAIEDSQVFAFPFTDENRKRDAYWRDVGTLEAYYEANMDLVGVDPQLNLYDRQWPIRSFQPQLPPPKFVFGSEGRSSRRGEALDSIVCQGAIISGGCVRRSVIGTGCRINSYAQVEDSILFDDVNVGRHSRIRRAIIDKGVQIPPETEIGYDLALDRARGLTVTDSGLVVIARGEMIASPVSTNGSHDPTSSLTS</sequence>
<name>GLGC_RHOBA</name>
<reference key="1">
    <citation type="journal article" date="2003" name="Proc. Natl. Acad. Sci. U.S.A.">
        <title>Complete genome sequence of the marine planctomycete Pirellula sp. strain 1.</title>
        <authorList>
            <person name="Gloeckner F.O."/>
            <person name="Kube M."/>
            <person name="Bauer M."/>
            <person name="Teeling H."/>
            <person name="Lombardot T."/>
            <person name="Ludwig W."/>
            <person name="Gade D."/>
            <person name="Beck A."/>
            <person name="Borzym K."/>
            <person name="Heitmann K."/>
            <person name="Rabus R."/>
            <person name="Schlesner H."/>
            <person name="Amann R."/>
            <person name="Reinhardt R."/>
        </authorList>
    </citation>
    <scope>NUCLEOTIDE SEQUENCE [LARGE SCALE GENOMIC DNA]</scope>
    <source>
        <strain>DSM 10527 / NCIMB 13988 / SH1</strain>
    </source>
</reference>
<dbReference type="EC" id="2.7.7.27" evidence="1"/>
<dbReference type="EMBL" id="BX294135">
    <property type="protein sequence ID" value="CAD72052.1"/>
    <property type="molecule type" value="Genomic_DNA"/>
</dbReference>
<dbReference type="RefSeq" id="NP_864373.1">
    <property type="nucleotide sequence ID" value="NC_005027.1"/>
</dbReference>
<dbReference type="RefSeq" id="WP_007329623.1">
    <property type="nucleotide sequence ID" value="NC_005027.1"/>
</dbReference>
<dbReference type="SMR" id="Q7UXF5"/>
<dbReference type="FunCoup" id="Q7UXF5">
    <property type="interactions" value="140"/>
</dbReference>
<dbReference type="STRING" id="243090.RB1358"/>
<dbReference type="EnsemblBacteria" id="CAD72052">
    <property type="protein sequence ID" value="CAD72052"/>
    <property type="gene ID" value="RB1358"/>
</dbReference>
<dbReference type="KEGG" id="rba:RB1358"/>
<dbReference type="PATRIC" id="fig|243090.15.peg.626"/>
<dbReference type="eggNOG" id="COG0448">
    <property type="taxonomic scope" value="Bacteria"/>
</dbReference>
<dbReference type="HOGENOM" id="CLU_029499_14_1_0"/>
<dbReference type="InParanoid" id="Q7UXF5"/>
<dbReference type="OrthoDB" id="9801810at2"/>
<dbReference type="UniPathway" id="UPA00164"/>
<dbReference type="Proteomes" id="UP000001025">
    <property type="component" value="Chromosome"/>
</dbReference>
<dbReference type="GO" id="GO:0005524">
    <property type="term" value="F:ATP binding"/>
    <property type="evidence" value="ECO:0007669"/>
    <property type="project" value="UniProtKB-KW"/>
</dbReference>
<dbReference type="GO" id="GO:0008878">
    <property type="term" value="F:glucose-1-phosphate adenylyltransferase activity"/>
    <property type="evidence" value="ECO:0007669"/>
    <property type="project" value="UniProtKB-UniRule"/>
</dbReference>
<dbReference type="GO" id="GO:0005978">
    <property type="term" value="P:glycogen biosynthetic process"/>
    <property type="evidence" value="ECO:0007669"/>
    <property type="project" value="UniProtKB-UniRule"/>
</dbReference>
<dbReference type="CDD" id="cd02508">
    <property type="entry name" value="ADP_Glucose_PP"/>
    <property type="match status" value="1"/>
</dbReference>
<dbReference type="CDD" id="cd04651">
    <property type="entry name" value="LbH_G1P_AT_C"/>
    <property type="match status" value="1"/>
</dbReference>
<dbReference type="Gene3D" id="2.160.10.10">
    <property type="entry name" value="Hexapeptide repeat proteins"/>
    <property type="match status" value="1"/>
</dbReference>
<dbReference type="Gene3D" id="3.90.550.10">
    <property type="entry name" value="Spore Coat Polysaccharide Biosynthesis Protein SpsA, Chain A"/>
    <property type="match status" value="1"/>
</dbReference>
<dbReference type="HAMAP" id="MF_00624">
    <property type="entry name" value="GlgC"/>
    <property type="match status" value="1"/>
</dbReference>
<dbReference type="InterPro" id="IPR011831">
    <property type="entry name" value="ADP-Glc_PPase"/>
</dbReference>
<dbReference type="InterPro" id="IPR005836">
    <property type="entry name" value="ADP_Glu_pyroP_CS"/>
</dbReference>
<dbReference type="InterPro" id="IPR023049">
    <property type="entry name" value="GlgC_bac"/>
</dbReference>
<dbReference type="InterPro" id="IPR056818">
    <property type="entry name" value="GlmU/GlgC-like_hexapep"/>
</dbReference>
<dbReference type="InterPro" id="IPR005835">
    <property type="entry name" value="NTP_transferase_dom"/>
</dbReference>
<dbReference type="InterPro" id="IPR029044">
    <property type="entry name" value="Nucleotide-diphossugar_trans"/>
</dbReference>
<dbReference type="InterPro" id="IPR011004">
    <property type="entry name" value="Trimer_LpxA-like_sf"/>
</dbReference>
<dbReference type="NCBIfam" id="TIGR02091">
    <property type="entry name" value="glgC"/>
    <property type="match status" value="1"/>
</dbReference>
<dbReference type="NCBIfam" id="NF001947">
    <property type="entry name" value="PRK00725.1"/>
    <property type="match status" value="1"/>
</dbReference>
<dbReference type="NCBIfam" id="NF002023">
    <property type="entry name" value="PRK00844.1"/>
    <property type="match status" value="1"/>
</dbReference>
<dbReference type="PANTHER" id="PTHR43523:SF2">
    <property type="entry name" value="GLUCOSE-1-PHOSPHATE ADENYLYLTRANSFERASE"/>
    <property type="match status" value="1"/>
</dbReference>
<dbReference type="PANTHER" id="PTHR43523">
    <property type="entry name" value="GLUCOSE-1-PHOSPHATE ADENYLYLTRANSFERASE-RELATED"/>
    <property type="match status" value="1"/>
</dbReference>
<dbReference type="Pfam" id="PF24894">
    <property type="entry name" value="Hexapep_GlmU"/>
    <property type="match status" value="1"/>
</dbReference>
<dbReference type="Pfam" id="PF00483">
    <property type="entry name" value="NTP_transferase"/>
    <property type="match status" value="1"/>
</dbReference>
<dbReference type="SUPFAM" id="SSF53448">
    <property type="entry name" value="Nucleotide-diphospho-sugar transferases"/>
    <property type="match status" value="1"/>
</dbReference>
<dbReference type="SUPFAM" id="SSF51161">
    <property type="entry name" value="Trimeric LpxA-like enzymes"/>
    <property type="match status" value="1"/>
</dbReference>
<dbReference type="PROSITE" id="PS00808">
    <property type="entry name" value="ADP_GLC_PYROPHOSPH_1"/>
    <property type="match status" value="1"/>
</dbReference>
<dbReference type="PROSITE" id="PS00809">
    <property type="entry name" value="ADP_GLC_PYROPHOSPH_2"/>
    <property type="match status" value="1"/>
</dbReference>
<dbReference type="PROSITE" id="PS00810">
    <property type="entry name" value="ADP_GLC_PYROPHOSPH_3"/>
    <property type="match status" value="1"/>
</dbReference>
<comment type="function">
    <text evidence="1">Involved in the biosynthesis of ADP-glucose, a building block required for the elongation reactions to produce glycogen. Catalyzes the reaction between ATP and alpha-D-glucose 1-phosphate (G1P) to produce pyrophosphate and ADP-Glc.</text>
</comment>
<comment type="catalytic activity">
    <reaction evidence="1">
        <text>alpha-D-glucose 1-phosphate + ATP + H(+) = ADP-alpha-D-glucose + diphosphate</text>
        <dbReference type="Rhea" id="RHEA:12120"/>
        <dbReference type="ChEBI" id="CHEBI:15378"/>
        <dbReference type="ChEBI" id="CHEBI:30616"/>
        <dbReference type="ChEBI" id="CHEBI:33019"/>
        <dbReference type="ChEBI" id="CHEBI:57498"/>
        <dbReference type="ChEBI" id="CHEBI:58601"/>
        <dbReference type="EC" id="2.7.7.27"/>
    </reaction>
</comment>
<comment type="pathway">
    <text evidence="1">Glycan biosynthesis; glycogen biosynthesis.</text>
</comment>
<comment type="subunit">
    <text evidence="1">Homotetramer.</text>
</comment>
<comment type="similarity">
    <text evidence="1">Belongs to the bacterial/plant glucose-1-phosphate adenylyltransferase family.</text>
</comment>
<proteinExistence type="inferred from homology"/>
<gene>
    <name evidence="1" type="primary">glgC</name>
    <name type="ordered locus">RB1358</name>
</gene>
<evidence type="ECO:0000255" key="1">
    <source>
        <dbReference type="HAMAP-Rule" id="MF_00624"/>
    </source>
</evidence>